<evidence type="ECO:0000255" key="1">
    <source>
        <dbReference type="HAMAP-Rule" id="MF_01241"/>
    </source>
</evidence>
<comment type="function">
    <text evidence="1">Catalyzes the reversible isomerization-deamination of glucosamine 6-phosphate (GlcN6P) to form fructose 6-phosphate (Fru6P) and ammonium ion.</text>
</comment>
<comment type="catalytic activity">
    <reaction evidence="1">
        <text>alpha-D-glucosamine 6-phosphate + H2O = beta-D-fructose 6-phosphate + NH4(+)</text>
        <dbReference type="Rhea" id="RHEA:12172"/>
        <dbReference type="ChEBI" id="CHEBI:15377"/>
        <dbReference type="ChEBI" id="CHEBI:28938"/>
        <dbReference type="ChEBI" id="CHEBI:57634"/>
        <dbReference type="ChEBI" id="CHEBI:75989"/>
        <dbReference type="EC" id="3.5.99.6"/>
    </reaction>
</comment>
<comment type="pathway">
    <text evidence="1">Amino-sugar metabolism; N-acetylneuraminate degradation; D-fructose 6-phosphate from N-acetylneuraminate: step 5/5.</text>
</comment>
<comment type="similarity">
    <text evidence="1">Belongs to the glucosamine/galactosamine-6-phosphate isomerase family. NagB subfamily.</text>
</comment>
<accession>Q49VB6</accession>
<gene>
    <name evidence="1" type="primary">nagB</name>
    <name type="ordered locus">SSP2149</name>
</gene>
<proteinExistence type="inferred from homology"/>
<dbReference type="EC" id="3.5.99.6" evidence="1"/>
<dbReference type="EMBL" id="AP008934">
    <property type="protein sequence ID" value="BAE19294.1"/>
    <property type="molecule type" value="Genomic_DNA"/>
</dbReference>
<dbReference type="RefSeq" id="WP_011303784.1">
    <property type="nucleotide sequence ID" value="NC_007350.1"/>
</dbReference>
<dbReference type="SMR" id="Q49VB6"/>
<dbReference type="GeneID" id="3616395"/>
<dbReference type="KEGG" id="ssp:SSP2149"/>
<dbReference type="PATRIC" id="fig|342451.11.peg.2140"/>
<dbReference type="eggNOG" id="COG0363">
    <property type="taxonomic scope" value="Bacteria"/>
</dbReference>
<dbReference type="HOGENOM" id="CLU_049611_1_1_9"/>
<dbReference type="OrthoDB" id="9791139at2"/>
<dbReference type="UniPathway" id="UPA00629">
    <property type="reaction ID" value="UER00684"/>
</dbReference>
<dbReference type="Proteomes" id="UP000006371">
    <property type="component" value="Chromosome"/>
</dbReference>
<dbReference type="GO" id="GO:0005737">
    <property type="term" value="C:cytoplasm"/>
    <property type="evidence" value="ECO:0007669"/>
    <property type="project" value="TreeGrafter"/>
</dbReference>
<dbReference type="GO" id="GO:0004342">
    <property type="term" value="F:glucosamine-6-phosphate deaminase activity"/>
    <property type="evidence" value="ECO:0007669"/>
    <property type="project" value="UniProtKB-UniRule"/>
</dbReference>
<dbReference type="GO" id="GO:0042802">
    <property type="term" value="F:identical protein binding"/>
    <property type="evidence" value="ECO:0007669"/>
    <property type="project" value="TreeGrafter"/>
</dbReference>
<dbReference type="GO" id="GO:0005975">
    <property type="term" value="P:carbohydrate metabolic process"/>
    <property type="evidence" value="ECO:0007669"/>
    <property type="project" value="InterPro"/>
</dbReference>
<dbReference type="GO" id="GO:0006043">
    <property type="term" value="P:glucosamine catabolic process"/>
    <property type="evidence" value="ECO:0007669"/>
    <property type="project" value="TreeGrafter"/>
</dbReference>
<dbReference type="GO" id="GO:0006046">
    <property type="term" value="P:N-acetylglucosamine catabolic process"/>
    <property type="evidence" value="ECO:0007669"/>
    <property type="project" value="TreeGrafter"/>
</dbReference>
<dbReference type="GO" id="GO:0019262">
    <property type="term" value="P:N-acetylneuraminate catabolic process"/>
    <property type="evidence" value="ECO:0007669"/>
    <property type="project" value="UniProtKB-UniRule"/>
</dbReference>
<dbReference type="CDD" id="cd01399">
    <property type="entry name" value="GlcN6P_deaminase"/>
    <property type="match status" value="1"/>
</dbReference>
<dbReference type="FunFam" id="3.40.50.1360:FF:000003">
    <property type="entry name" value="Glucosamine-6-phosphate deaminase"/>
    <property type="match status" value="1"/>
</dbReference>
<dbReference type="Gene3D" id="3.40.50.1360">
    <property type="match status" value="1"/>
</dbReference>
<dbReference type="HAMAP" id="MF_01241">
    <property type="entry name" value="GlcN6P_deamin"/>
    <property type="match status" value="1"/>
</dbReference>
<dbReference type="InterPro" id="IPR006148">
    <property type="entry name" value="Glc/Gal-6P_isomerase"/>
</dbReference>
<dbReference type="InterPro" id="IPR004547">
    <property type="entry name" value="Glucosamine6P_isomerase"/>
</dbReference>
<dbReference type="InterPro" id="IPR018321">
    <property type="entry name" value="Glucosamine6P_isomerase_CS"/>
</dbReference>
<dbReference type="InterPro" id="IPR037171">
    <property type="entry name" value="NagB/RpiA_transferase-like"/>
</dbReference>
<dbReference type="NCBIfam" id="TIGR00502">
    <property type="entry name" value="nagB"/>
    <property type="match status" value="1"/>
</dbReference>
<dbReference type="PANTHER" id="PTHR11280">
    <property type="entry name" value="GLUCOSAMINE-6-PHOSPHATE ISOMERASE"/>
    <property type="match status" value="1"/>
</dbReference>
<dbReference type="PANTHER" id="PTHR11280:SF5">
    <property type="entry name" value="GLUCOSAMINE-6-PHOSPHATE ISOMERASE"/>
    <property type="match status" value="1"/>
</dbReference>
<dbReference type="Pfam" id="PF01182">
    <property type="entry name" value="Glucosamine_iso"/>
    <property type="match status" value="1"/>
</dbReference>
<dbReference type="SUPFAM" id="SSF100950">
    <property type="entry name" value="NagB/RpiA/CoA transferase-like"/>
    <property type="match status" value="1"/>
</dbReference>
<dbReference type="PROSITE" id="PS01161">
    <property type="entry name" value="GLC_GALNAC_ISOMERASE"/>
    <property type="match status" value="1"/>
</dbReference>
<reference key="1">
    <citation type="journal article" date="2005" name="Proc. Natl. Acad. Sci. U.S.A.">
        <title>Whole genome sequence of Staphylococcus saprophyticus reveals the pathogenesis of uncomplicated urinary tract infection.</title>
        <authorList>
            <person name="Kuroda M."/>
            <person name="Yamashita A."/>
            <person name="Hirakawa H."/>
            <person name="Kumano M."/>
            <person name="Morikawa K."/>
            <person name="Higashide M."/>
            <person name="Maruyama A."/>
            <person name="Inose Y."/>
            <person name="Matoba K."/>
            <person name="Toh H."/>
            <person name="Kuhara S."/>
            <person name="Hattori M."/>
            <person name="Ohta T."/>
        </authorList>
    </citation>
    <scope>NUCLEOTIDE SEQUENCE [LARGE SCALE GENOMIC DNA]</scope>
    <source>
        <strain>ATCC 15305 / DSM 20229 / NCIMB 8711 / NCTC 7292 / S-41</strain>
    </source>
</reference>
<sequence>MKITNLGTSGYASFYVACELYKQMSQQNHSKLGLATGGTMVDVYRFLVQLLRKNKLDVSEIETFNLDEYVGLDAQHEQSYHSYMNEMLFKQYPYFNPSLLHIPNGDADNLNDETKRYEQLINQKGPVDIQILGIGENGHIGFNEPGTDINSATHIVDLTESTISANSRYFDNEVDVPKQAVSMGLSTILKAHRIILLAFGEKKRAAIEKLAENEVNSDVPATILHAHPNVEIYVDDEAAPRL</sequence>
<protein>
    <recommendedName>
        <fullName evidence="1">Glucosamine-6-phosphate deaminase</fullName>
        <ecNumber evidence="1">3.5.99.6</ecNumber>
    </recommendedName>
    <alternativeName>
        <fullName evidence="1">GlcN6P deaminase</fullName>
        <shortName evidence="1">GNPDA</shortName>
    </alternativeName>
    <alternativeName>
        <fullName evidence="1">Glucosamine-6-phosphate isomerase</fullName>
    </alternativeName>
</protein>
<organism>
    <name type="scientific">Staphylococcus saprophyticus subsp. saprophyticus (strain ATCC 15305 / DSM 20229 / NCIMB 8711 / NCTC 7292 / S-41)</name>
    <dbReference type="NCBI Taxonomy" id="342451"/>
    <lineage>
        <taxon>Bacteria</taxon>
        <taxon>Bacillati</taxon>
        <taxon>Bacillota</taxon>
        <taxon>Bacilli</taxon>
        <taxon>Bacillales</taxon>
        <taxon>Staphylococcaceae</taxon>
        <taxon>Staphylococcus</taxon>
    </lineage>
</organism>
<feature type="chain" id="PRO_0000160171" description="Glucosamine-6-phosphate deaminase">
    <location>
        <begin position="1"/>
        <end position="242"/>
    </location>
</feature>
<feature type="active site" description="Proton acceptor; for enolization step" evidence="1">
    <location>
        <position position="67"/>
    </location>
</feature>
<feature type="active site" description="For ring-opening step" evidence="1">
    <location>
        <position position="137"/>
    </location>
</feature>
<feature type="active site" description="Proton acceptor; for ring-opening step" evidence="1">
    <location>
        <position position="139"/>
    </location>
</feature>
<feature type="active site" description="For ring-opening step" evidence="1">
    <location>
        <position position="144"/>
    </location>
</feature>
<keyword id="KW-0119">Carbohydrate metabolism</keyword>
<keyword id="KW-0378">Hydrolase</keyword>
<keyword id="KW-1185">Reference proteome</keyword>
<name>NAGB_STAS1</name>